<evidence type="ECO:0000255" key="1">
    <source>
        <dbReference type="HAMAP-Rule" id="MF_00531"/>
    </source>
</evidence>
<evidence type="ECO:0000305" key="2"/>
<comment type="function">
    <text evidence="1">Protein S19 forms a complex with S13 that binds strongly to the 16S ribosomal RNA.</text>
</comment>
<comment type="similarity">
    <text evidence="1">Belongs to the universal ribosomal protein uS19 family.</text>
</comment>
<dbReference type="EMBL" id="AM743169">
    <property type="protein sequence ID" value="CAQ44479.1"/>
    <property type="molecule type" value="Genomic_DNA"/>
</dbReference>
<dbReference type="RefSeq" id="WP_004154485.1">
    <property type="nucleotide sequence ID" value="NC_010943.1"/>
</dbReference>
<dbReference type="SMR" id="B2FQ49"/>
<dbReference type="EnsemblBacteria" id="CAQ44479">
    <property type="protein sequence ID" value="CAQ44479"/>
    <property type="gene ID" value="Smlt0910"/>
</dbReference>
<dbReference type="GeneID" id="93831940"/>
<dbReference type="KEGG" id="sml:Smlt0910"/>
<dbReference type="eggNOG" id="COG0185">
    <property type="taxonomic scope" value="Bacteria"/>
</dbReference>
<dbReference type="HOGENOM" id="CLU_144911_0_1_6"/>
<dbReference type="Proteomes" id="UP000008840">
    <property type="component" value="Chromosome"/>
</dbReference>
<dbReference type="GO" id="GO:0005737">
    <property type="term" value="C:cytoplasm"/>
    <property type="evidence" value="ECO:0007669"/>
    <property type="project" value="UniProtKB-ARBA"/>
</dbReference>
<dbReference type="GO" id="GO:0015935">
    <property type="term" value="C:small ribosomal subunit"/>
    <property type="evidence" value="ECO:0007669"/>
    <property type="project" value="InterPro"/>
</dbReference>
<dbReference type="GO" id="GO:0019843">
    <property type="term" value="F:rRNA binding"/>
    <property type="evidence" value="ECO:0007669"/>
    <property type="project" value="UniProtKB-UniRule"/>
</dbReference>
<dbReference type="GO" id="GO:0003735">
    <property type="term" value="F:structural constituent of ribosome"/>
    <property type="evidence" value="ECO:0007669"/>
    <property type="project" value="InterPro"/>
</dbReference>
<dbReference type="GO" id="GO:0000028">
    <property type="term" value="P:ribosomal small subunit assembly"/>
    <property type="evidence" value="ECO:0007669"/>
    <property type="project" value="TreeGrafter"/>
</dbReference>
<dbReference type="GO" id="GO:0006412">
    <property type="term" value="P:translation"/>
    <property type="evidence" value="ECO:0007669"/>
    <property type="project" value="UniProtKB-UniRule"/>
</dbReference>
<dbReference type="FunFam" id="3.30.860.10:FF:000001">
    <property type="entry name" value="30S ribosomal protein S19"/>
    <property type="match status" value="1"/>
</dbReference>
<dbReference type="Gene3D" id="3.30.860.10">
    <property type="entry name" value="30s Ribosomal Protein S19, Chain A"/>
    <property type="match status" value="1"/>
</dbReference>
<dbReference type="HAMAP" id="MF_00531">
    <property type="entry name" value="Ribosomal_uS19"/>
    <property type="match status" value="1"/>
</dbReference>
<dbReference type="InterPro" id="IPR002222">
    <property type="entry name" value="Ribosomal_uS19"/>
</dbReference>
<dbReference type="InterPro" id="IPR005732">
    <property type="entry name" value="Ribosomal_uS19_bac-type"/>
</dbReference>
<dbReference type="InterPro" id="IPR020934">
    <property type="entry name" value="Ribosomal_uS19_CS"/>
</dbReference>
<dbReference type="InterPro" id="IPR023575">
    <property type="entry name" value="Ribosomal_uS19_SF"/>
</dbReference>
<dbReference type="NCBIfam" id="TIGR01050">
    <property type="entry name" value="rpsS_bact"/>
    <property type="match status" value="1"/>
</dbReference>
<dbReference type="PANTHER" id="PTHR11880">
    <property type="entry name" value="RIBOSOMAL PROTEIN S19P FAMILY MEMBER"/>
    <property type="match status" value="1"/>
</dbReference>
<dbReference type="PANTHER" id="PTHR11880:SF8">
    <property type="entry name" value="SMALL RIBOSOMAL SUBUNIT PROTEIN US19M"/>
    <property type="match status" value="1"/>
</dbReference>
<dbReference type="Pfam" id="PF00203">
    <property type="entry name" value="Ribosomal_S19"/>
    <property type="match status" value="1"/>
</dbReference>
<dbReference type="PIRSF" id="PIRSF002144">
    <property type="entry name" value="Ribosomal_S19"/>
    <property type="match status" value="1"/>
</dbReference>
<dbReference type="PRINTS" id="PR00975">
    <property type="entry name" value="RIBOSOMALS19"/>
</dbReference>
<dbReference type="SUPFAM" id="SSF54570">
    <property type="entry name" value="Ribosomal protein S19"/>
    <property type="match status" value="1"/>
</dbReference>
<dbReference type="PROSITE" id="PS00323">
    <property type="entry name" value="RIBOSOMAL_S19"/>
    <property type="match status" value="1"/>
</dbReference>
<accession>B2FQ49</accession>
<sequence>MARSLKKGPFVDHHLVKKVEAAAGSKKPIKTWSRRSMILPDMVGVTIAVHNGKNHIPVLVNENMVGHKLGEFAITRTFKGHGGDKKSGK</sequence>
<name>RS19_STRMK</name>
<protein>
    <recommendedName>
        <fullName evidence="1">Small ribosomal subunit protein uS19</fullName>
    </recommendedName>
    <alternativeName>
        <fullName evidence="2">30S ribosomal protein S19</fullName>
    </alternativeName>
</protein>
<feature type="chain" id="PRO_1000128041" description="Small ribosomal subunit protein uS19">
    <location>
        <begin position="1"/>
        <end position="89"/>
    </location>
</feature>
<organism>
    <name type="scientific">Stenotrophomonas maltophilia (strain K279a)</name>
    <dbReference type="NCBI Taxonomy" id="522373"/>
    <lineage>
        <taxon>Bacteria</taxon>
        <taxon>Pseudomonadati</taxon>
        <taxon>Pseudomonadota</taxon>
        <taxon>Gammaproteobacteria</taxon>
        <taxon>Lysobacterales</taxon>
        <taxon>Lysobacteraceae</taxon>
        <taxon>Stenotrophomonas</taxon>
        <taxon>Stenotrophomonas maltophilia group</taxon>
    </lineage>
</organism>
<keyword id="KW-1185">Reference proteome</keyword>
<keyword id="KW-0687">Ribonucleoprotein</keyword>
<keyword id="KW-0689">Ribosomal protein</keyword>
<keyword id="KW-0694">RNA-binding</keyword>
<keyword id="KW-0699">rRNA-binding</keyword>
<proteinExistence type="inferred from homology"/>
<gene>
    <name evidence="1" type="primary">rpsS</name>
    <name type="ordered locus">Smlt0910</name>
</gene>
<reference key="1">
    <citation type="journal article" date="2008" name="Genome Biol.">
        <title>The complete genome, comparative and functional analysis of Stenotrophomonas maltophilia reveals an organism heavily shielded by drug resistance determinants.</title>
        <authorList>
            <person name="Crossman L.C."/>
            <person name="Gould V.C."/>
            <person name="Dow J.M."/>
            <person name="Vernikos G.S."/>
            <person name="Okazaki A."/>
            <person name="Sebaihia M."/>
            <person name="Saunders D."/>
            <person name="Arrowsmith C."/>
            <person name="Carver T."/>
            <person name="Peters N."/>
            <person name="Adlem E."/>
            <person name="Kerhornou A."/>
            <person name="Lord A."/>
            <person name="Murphy L."/>
            <person name="Seeger K."/>
            <person name="Squares R."/>
            <person name="Rutter S."/>
            <person name="Quail M.A."/>
            <person name="Rajandream M.A."/>
            <person name="Harris D."/>
            <person name="Churcher C."/>
            <person name="Bentley S.D."/>
            <person name="Parkhill J."/>
            <person name="Thomson N.R."/>
            <person name="Avison M.B."/>
        </authorList>
    </citation>
    <scope>NUCLEOTIDE SEQUENCE [LARGE SCALE GENOMIC DNA]</scope>
    <source>
        <strain>K279a</strain>
    </source>
</reference>